<reference key="1">
    <citation type="submission" date="2006-03" db="EMBL/GenBank/DDBJ databases">
        <title>Complete sequence of Rhodopseudomonas palustris BisB18.</title>
        <authorList>
            <consortium name="US DOE Joint Genome Institute"/>
            <person name="Copeland A."/>
            <person name="Lucas S."/>
            <person name="Lapidus A."/>
            <person name="Barry K."/>
            <person name="Detter J.C."/>
            <person name="Glavina del Rio T."/>
            <person name="Hammon N."/>
            <person name="Israni S."/>
            <person name="Dalin E."/>
            <person name="Tice H."/>
            <person name="Pitluck S."/>
            <person name="Chain P."/>
            <person name="Malfatti S."/>
            <person name="Shin M."/>
            <person name="Vergez L."/>
            <person name="Schmutz J."/>
            <person name="Larimer F."/>
            <person name="Land M."/>
            <person name="Hauser L."/>
            <person name="Pelletier D.A."/>
            <person name="Kyrpides N."/>
            <person name="Anderson I."/>
            <person name="Oda Y."/>
            <person name="Harwood C.S."/>
            <person name="Richardson P."/>
        </authorList>
    </citation>
    <scope>NUCLEOTIDE SEQUENCE [LARGE SCALE GENOMIC DNA]</scope>
    <source>
        <strain>BisB18</strain>
    </source>
</reference>
<comment type="similarity">
    <text evidence="1">Belongs to the UPF0335 family.</text>
</comment>
<gene>
    <name type="ordered locus">RPC_3979</name>
</gene>
<name>Y3979_RHOPB</name>
<evidence type="ECO:0000255" key="1">
    <source>
        <dbReference type="HAMAP-Rule" id="MF_00797"/>
    </source>
</evidence>
<proteinExistence type="inferred from homology"/>
<organism>
    <name type="scientific">Rhodopseudomonas palustris (strain BisB18)</name>
    <dbReference type="NCBI Taxonomy" id="316056"/>
    <lineage>
        <taxon>Bacteria</taxon>
        <taxon>Pseudomonadati</taxon>
        <taxon>Pseudomonadota</taxon>
        <taxon>Alphaproteobacteria</taxon>
        <taxon>Hyphomicrobiales</taxon>
        <taxon>Nitrobacteraceae</taxon>
        <taxon>Rhodopseudomonas</taxon>
    </lineage>
</organism>
<feature type="chain" id="PRO_1000083687" description="UPF0335 protein RPC_3979">
    <location>
        <begin position="1"/>
        <end position="89"/>
    </location>
</feature>
<dbReference type="EMBL" id="CP000301">
    <property type="protein sequence ID" value="ABD89505.1"/>
    <property type="molecule type" value="Genomic_DNA"/>
</dbReference>
<dbReference type="SMR" id="Q20ZD1"/>
<dbReference type="STRING" id="316056.RPC_3979"/>
<dbReference type="KEGG" id="rpc:RPC_3979"/>
<dbReference type="eggNOG" id="COG3750">
    <property type="taxonomic scope" value="Bacteria"/>
</dbReference>
<dbReference type="HOGENOM" id="CLU_158651_2_0_5"/>
<dbReference type="OrthoDB" id="9813793at2"/>
<dbReference type="GO" id="GO:0003677">
    <property type="term" value="F:DNA binding"/>
    <property type="evidence" value="ECO:0007669"/>
    <property type="project" value="InterPro"/>
</dbReference>
<dbReference type="HAMAP" id="MF_00797">
    <property type="entry name" value="UPF0335"/>
    <property type="match status" value="1"/>
</dbReference>
<dbReference type="InterPro" id="IPR018753">
    <property type="entry name" value="GapR-like"/>
</dbReference>
<dbReference type="InterPro" id="IPR046367">
    <property type="entry name" value="GapR-like_DNA-bd"/>
</dbReference>
<dbReference type="NCBIfam" id="NF010247">
    <property type="entry name" value="PRK13694.1"/>
    <property type="match status" value="1"/>
</dbReference>
<dbReference type="Pfam" id="PF10073">
    <property type="entry name" value="GapR_DNA-bd"/>
    <property type="match status" value="1"/>
</dbReference>
<sequence length="89" mass="10177">MATSAAVKEEPATQFAKDQLKAIIERIERLEEEKKTISDDIRDVYAEAKGNGYDVKALRTIVRMRKQDANERAEQETILETYMQALGML</sequence>
<accession>Q20ZD1</accession>
<protein>
    <recommendedName>
        <fullName evidence="1">UPF0335 protein RPC_3979</fullName>
    </recommendedName>
</protein>